<organism>
    <name type="scientific">Escherichia coli O81 (strain ED1a)</name>
    <dbReference type="NCBI Taxonomy" id="585397"/>
    <lineage>
        <taxon>Bacteria</taxon>
        <taxon>Pseudomonadati</taxon>
        <taxon>Pseudomonadota</taxon>
        <taxon>Gammaproteobacteria</taxon>
        <taxon>Enterobacterales</taxon>
        <taxon>Enterobacteriaceae</taxon>
        <taxon>Escherichia</taxon>
    </lineage>
</organism>
<proteinExistence type="inferred from homology"/>
<comment type="function">
    <text evidence="1">Interacts with the SecY protein in vivo. May bind preferentially to an uncomplexed state of SecY, thus functioning either as a chelating agent for excess SecY in the cell or as a regulatory factor that negatively controls the translocase function.</text>
</comment>
<comment type="subcellular location">
    <subcellularLocation>
        <location evidence="1">Cell inner membrane</location>
        <topology evidence="1">Peripheral membrane protein</topology>
        <orientation evidence="1">Cytoplasmic side</orientation>
    </subcellularLocation>
    <text evidence="1">Loosely associated with the cytoplasmic side of the inner membrane, probably via SecY.</text>
</comment>
<comment type="similarity">
    <text evidence="1">Belongs to the Syd family.</text>
</comment>
<accession>B7MZ89</accession>
<reference key="1">
    <citation type="journal article" date="2009" name="PLoS Genet.">
        <title>Organised genome dynamics in the Escherichia coli species results in highly diverse adaptive paths.</title>
        <authorList>
            <person name="Touchon M."/>
            <person name="Hoede C."/>
            <person name="Tenaillon O."/>
            <person name="Barbe V."/>
            <person name="Baeriswyl S."/>
            <person name="Bidet P."/>
            <person name="Bingen E."/>
            <person name="Bonacorsi S."/>
            <person name="Bouchier C."/>
            <person name="Bouvet O."/>
            <person name="Calteau A."/>
            <person name="Chiapello H."/>
            <person name="Clermont O."/>
            <person name="Cruveiller S."/>
            <person name="Danchin A."/>
            <person name="Diard M."/>
            <person name="Dossat C."/>
            <person name="Karoui M.E."/>
            <person name="Frapy E."/>
            <person name="Garry L."/>
            <person name="Ghigo J.M."/>
            <person name="Gilles A.M."/>
            <person name="Johnson J."/>
            <person name="Le Bouguenec C."/>
            <person name="Lescat M."/>
            <person name="Mangenot S."/>
            <person name="Martinez-Jehanne V."/>
            <person name="Matic I."/>
            <person name="Nassif X."/>
            <person name="Oztas S."/>
            <person name="Petit M.A."/>
            <person name="Pichon C."/>
            <person name="Rouy Z."/>
            <person name="Ruf C.S."/>
            <person name="Schneider D."/>
            <person name="Tourret J."/>
            <person name="Vacherie B."/>
            <person name="Vallenet D."/>
            <person name="Medigue C."/>
            <person name="Rocha E.P.C."/>
            <person name="Denamur E."/>
        </authorList>
    </citation>
    <scope>NUCLEOTIDE SEQUENCE [LARGE SCALE GENOMIC DNA]</scope>
    <source>
        <strain>ED1a</strain>
    </source>
</reference>
<keyword id="KW-0997">Cell inner membrane</keyword>
<keyword id="KW-1003">Cell membrane</keyword>
<keyword id="KW-0472">Membrane</keyword>
<gene>
    <name evidence="1" type="primary">syd</name>
    <name type="ordered locus">ECED1_3246</name>
</gene>
<evidence type="ECO:0000255" key="1">
    <source>
        <dbReference type="HAMAP-Rule" id="MF_01104"/>
    </source>
</evidence>
<dbReference type="EMBL" id="CU928162">
    <property type="protein sequence ID" value="CAR09406.2"/>
    <property type="molecule type" value="Genomic_DNA"/>
</dbReference>
<dbReference type="RefSeq" id="WP_000342422.1">
    <property type="nucleotide sequence ID" value="NC_011745.1"/>
</dbReference>
<dbReference type="SMR" id="B7MZ89"/>
<dbReference type="KEGG" id="ecq:ECED1_3246"/>
<dbReference type="HOGENOM" id="CLU_121866_0_0_6"/>
<dbReference type="Proteomes" id="UP000000748">
    <property type="component" value="Chromosome"/>
</dbReference>
<dbReference type="GO" id="GO:0009898">
    <property type="term" value="C:cytoplasmic side of plasma membrane"/>
    <property type="evidence" value="ECO:0007669"/>
    <property type="project" value="InterPro"/>
</dbReference>
<dbReference type="CDD" id="cd16323">
    <property type="entry name" value="Syd"/>
    <property type="match status" value="1"/>
</dbReference>
<dbReference type="FunFam" id="3.40.1580.20:FF:000001">
    <property type="entry name" value="Protein Syd"/>
    <property type="match status" value="1"/>
</dbReference>
<dbReference type="Gene3D" id="3.40.1580.20">
    <property type="entry name" value="Syd protein"/>
    <property type="match status" value="1"/>
</dbReference>
<dbReference type="HAMAP" id="MF_01104">
    <property type="entry name" value="Syd"/>
    <property type="match status" value="1"/>
</dbReference>
<dbReference type="InterPro" id="IPR009948">
    <property type="entry name" value="Syd"/>
</dbReference>
<dbReference type="InterPro" id="IPR038228">
    <property type="entry name" value="Syd_sf"/>
</dbReference>
<dbReference type="NCBIfam" id="NF003439">
    <property type="entry name" value="PRK04968.1"/>
    <property type="match status" value="1"/>
</dbReference>
<dbReference type="Pfam" id="PF07348">
    <property type="entry name" value="Syd"/>
    <property type="match status" value="1"/>
</dbReference>
<sequence length="181" mass="20723">MDDLTAQALKDFTARYCDAWHEEHKSWPLSEELYGVPSPCIISTTEDAIYWQPQPFTGEQNVNAVERAFDIVIQPTIHTFYTTQFAGDMHAQFGDIKLTLLQTWSEDDFRRVQENLIGHLVTQKRLKLPPTLFIATLEEELEVISVCNLSGEVCKETLGTRKRTHLASNLAEFLNQLKPLL</sequence>
<name>SYDP_ECO81</name>
<feature type="chain" id="PRO_1000163946" description="Protein Syd">
    <location>
        <begin position="1"/>
        <end position="181"/>
    </location>
</feature>
<protein>
    <recommendedName>
        <fullName evidence="1">Protein Syd</fullName>
    </recommendedName>
</protein>